<keyword id="KW-0963">Cytoplasm</keyword>
<keyword id="KW-0328">Glycosyltransferase</keyword>
<keyword id="KW-0460">Magnesium</keyword>
<keyword id="KW-0479">Metal-binding</keyword>
<keyword id="KW-0547">Nucleotide-binding</keyword>
<keyword id="KW-0660">Purine salvage</keyword>
<keyword id="KW-0808">Transferase</keyword>
<reference key="1">
    <citation type="journal article" date="1996" name="Exp. Parasitol.">
        <title>Crithidia fasciculata: isolation, sequencing, and expression of the hypoxanthine-guanine phosphoribosyltransferase gene.</title>
        <authorList>
            <person name="Jiang Y."/>
            <person name="Allen T.E."/>
            <person name="Carter D."/>
            <person name="Ray D.S."/>
            <person name="Ullman B."/>
        </authorList>
    </citation>
    <scope>NUCLEOTIDE SEQUENCE [GENOMIC DNA]</scope>
</reference>
<proteinExistence type="inferred from homology"/>
<name>HPRT_CRIFA</name>
<sequence>MSNAASPATSAAPVRHYPMSCRTLATQEQIWSATAKCAKQIAEDYKQYNLSDENPLYLLCVLKGSFMFTADLARFLCDEGVPVRIEFICASSYGTDVKTSGEVRLLLDVRDPVENRHLLIVEDIVDSAITLEYLKRFLQAKQPASLKTVVLLDKPSGRKVTLSVDYPVITIPHAFVIGYGMDFAEAYRELRDVCVLKKEYYEKPASKL</sequence>
<gene>
    <name type="primary">HGPRT</name>
</gene>
<accession>Q27541</accession>
<comment type="function">
    <text evidence="1">Converts guanine to guanosine monophosphate, and hypoxanthine to inosine monophosphate. Transfers the 5-phosphoribosyl group from 5-phosphoribosylpyrophosphate onto the purine. Plays a central role in the generation of purine nucleotides through the purine salvage pathway (By similarity).</text>
</comment>
<comment type="catalytic activity">
    <reaction>
        <text>IMP + diphosphate = hypoxanthine + 5-phospho-alpha-D-ribose 1-diphosphate</text>
        <dbReference type="Rhea" id="RHEA:17973"/>
        <dbReference type="ChEBI" id="CHEBI:17368"/>
        <dbReference type="ChEBI" id="CHEBI:33019"/>
        <dbReference type="ChEBI" id="CHEBI:58017"/>
        <dbReference type="ChEBI" id="CHEBI:58053"/>
        <dbReference type="EC" id="2.4.2.8"/>
    </reaction>
</comment>
<comment type="catalytic activity">
    <reaction>
        <text>GMP + diphosphate = guanine + 5-phospho-alpha-D-ribose 1-diphosphate</text>
        <dbReference type="Rhea" id="RHEA:25424"/>
        <dbReference type="ChEBI" id="CHEBI:16235"/>
        <dbReference type="ChEBI" id="CHEBI:33019"/>
        <dbReference type="ChEBI" id="CHEBI:58017"/>
        <dbReference type="ChEBI" id="CHEBI:58115"/>
        <dbReference type="EC" id="2.4.2.8"/>
    </reaction>
</comment>
<comment type="cofactor">
    <cofactor evidence="1">
        <name>Mg(2+)</name>
        <dbReference type="ChEBI" id="CHEBI:18420"/>
    </cofactor>
    <text evidence="1">Binds 2 magnesium ions per subunit. The magnesium ions are essentially bound to the substrate and have few direct interactions with the protein.</text>
</comment>
<comment type="pathway">
    <text>Purine metabolism; IMP biosynthesis via salvage pathway; IMP from hypoxanthine: step 1/1.</text>
</comment>
<comment type="subcellular location">
    <subcellularLocation>
        <location>Cytoplasm</location>
    </subcellularLocation>
</comment>
<comment type="similarity">
    <text evidence="2">Belongs to the purine/pyrimidine phosphoribosyltransferase family.</text>
</comment>
<evidence type="ECO:0000250" key="1"/>
<evidence type="ECO:0000305" key="2"/>
<organism>
    <name type="scientific">Crithidia fasciculata</name>
    <dbReference type="NCBI Taxonomy" id="5656"/>
    <lineage>
        <taxon>Eukaryota</taxon>
        <taxon>Discoba</taxon>
        <taxon>Euglenozoa</taxon>
        <taxon>Kinetoplastea</taxon>
        <taxon>Metakinetoplastina</taxon>
        <taxon>Trypanosomatida</taxon>
        <taxon>Trypanosomatidae</taxon>
        <taxon>Leishmaniinae</taxon>
        <taxon>Crithidia</taxon>
    </lineage>
</organism>
<feature type="chain" id="PRO_0000139595" description="Hypoxanthine-guanine phosphoribosyltransferase">
    <location>
        <begin position="1"/>
        <end position="208"/>
    </location>
</feature>
<feature type="active site" description="Proton acceptor" evidence="1">
    <location>
        <position position="126"/>
    </location>
</feature>
<feature type="binding site" evidence="1">
    <location>
        <position position="63"/>
    </location>
    <ligand>
        <name>GMP</name>
        <dbReference type="ChEBI" id="CHEBI:58115"/>
    </ligand>
</feature>
<feature type="binding site" evidence="1">
    <location>
        <begin position="122"/>
        <end position="130"/>
    </location>
    <ligand>
        <name>GMP</name>
        <dbReference type="ChEBI" id="CHEBI:58115"/>
    </ligand>
</feature>
<feature type="binding site" evidence="1">
    <location>
        <position position="154"/>
    </location>
    <ligand>
        <name>GMP</name>
        <dbReference type="ChEBI" id="CHEBI:58115"/>
    </ligand>
</feature>
<feature type="binding site" evidence="1">
    <location>
        <position position="182"/>
    </location>
    <ligand>
        <name>GMP</name>
        <dbReference type="ChEBI" id="CHEBI:58115"/>
    </ligand>
</feature>
<feature type="binding site" evidence="1">
    <location>
        <position position="182"/>
    </location>
    <ligand>
        <name>Mg(2+)</name>
        <dbReference type="ChEBI" id="CHEBI:18420"/>
    </ligand>
</feature>
<protein>
    <recommendedName>
        <fullName>Hypoxanthine-guanine phosphoribosyltransferase</fullName>
        <shortName>HGPRT</shortName>
        <shortName>HGPRTase</shortName>
        <ecNumber>2.4.2.8</ecNumber>
    </recommendedName>
</protein>
<dbReference type="EC" id="2.4.2.8"/>
<dbReference type="EMBL" id="U19968">
    <property type="protein sequence ID" value="AAB04164.1"/>
    <property type="molecule type" value="Genomic_DNA"/>
</dbReference>
<dbReference type="SMR" id="Q27541"/>
<dbReference type="VEuPathDB" id="TriTrypDB:CFAC1_130013300"/>
<dbReference type="UniPathway" id="UPA00591">
    <property type="reaction ID" value="UER00648"/>
</dbReference>
<dbReference type="GO" id="GO:0005829">
    <property type="term" value="C:cytosol"/>
    <property type="evidence" value="ECO:0007669"/>
    <property type="project" value="TreeGrafter"/>
</dbReference>
<dbReference type="GO" id="GO:0052657">
    <property type="term" value="F:guanine phosphoribosyltransferase activity"/>
    <property type="evidence" value="ECO:0007669"/>
    <property type="project" value="RHEA"/>
</dbReference>
<dbReference type="GO" id="GO:0004422">
    <property type="term" value="F:hypoxanthine phosphoribosyltransferase activity"/>
    <property type="evidence" value="ECO:0007669"/>
    <property type="project" value="InterPro"/>
</dbReference>
<dbReference type="GO" id="GO:0000287">
    <property type="term" value="F:magnesium ion binding"/>
    <property type="evidence" value="ECO:0007669"/>
    <property type="project" value="TreeGrafter"/>
</dbReference>
<dbReference type="GO" id="GO:0000166">
    <property type="term" value="F:nucleotide binding"/>
    <property type="evidence" value="ECO:0007669"/>
    <property type="project" value="UniProtKB-KW"/>
</dbReference>
<dbReference type="GO" id="GO:0032263">
    <property type="term" value="P:GMP salvage"/>
    <property type="evidence" value="ECO:0007669"/>
    <property type="project" value="TreeGrafter"/>
</dbReference>
<dbReference type="GO" id="GO:0006178">
    <property type="term" value="P:guanine salvage"/>
    <property type="evidence" value="ECO:0007669"/>
    <property type="project" value="TreeGrafter"/>
</dbReference>
<dbReference type="GO" id="GO:0046100">
    <property type="term" value="P:hypoxanthine metabolic process"/>
    <property type="evidence" value="ECO:0007669"/>
    <property type="project" value="TreeGrafter"/>
</dbReference>
<dbReference type="GO" id="GO:0032264">
    <property type="term" value="P:IMP salvage"/>
    <property type="evidence" value="ECO:0007669"/>
    <property type="project" value="UniProtKB-UniPathway"/>
</dbReference>
<dbReference type="GO" id="GO:0006166">
    <property type="term" value="P:purine ribonucleoside salvage"/>
    <property type="evidence" value="ECO:0007669"/>
    <property type="project" value="UniProtKB-KW"/>
</dbReference>
<dbReference type="CDD" id="cd06223">
    <property type="entry name" value="PRTases_typeI"/>
    <property type="match status" value="1"/>
</dbReference>
<dbReference type="FunFam" id="3.40.50.2020:FF:000006">
    <property type="entry name" value="Hypoxanthine phosphoribosyltransferase"/>
    <property type="match status" value="1"/>
</dbReference>
<dbReference type="Gene3D" id="3.40.50.2020">
    <property type="match status" value="1"/>
</dbReference>
<dbReference type="InterPro" id="IPR050408">
    <property type="entry name" value="HGPRT"/>
</dbReference>
<dbReference type="InterPro" id="IPR005904">
    <property type="entry name" value="Hxn_phspho_trans"/>
</dbReference>
<dbReference type="InterPro" id="IPR000836">
    <property type="entry name" value="PRibTrfase_dom"/>
</dbReference>
<dbReference type="InterPro" id="IPR029057">
    <property type="entry name" value="PRTase-like"/>
</dbReference>
<dbReference type="NCBIfam" id="TIGR01203">
    <property type="entry name" value="HGPRTase"/>
    <property type="match status" value="1"/>
</dbReference>
<dbReference type="PANTHER" id="PTHR43340:SF1">
    <property type="entry name" value="HYPOXANTHINE PHOSPHORIBOSYLTRANSFERASE"/>
    <property type="match status" value="1"/>
</dbReference>
<dbReference type="PANTHER" id="PTHR43340">
    <property type="entry name" value="HYPOXANTHINE-GUANINE PHOSPHORIBOSYLTRANSFERASE"/>
    <property type="match status" value="1"/>
</dbReference>
<dbReference type="Pfam" id="PF00156">
    <property type="entry name" value="Pribosyltran"/>
    <property type="match status" value="1"/>
</dbReference>
<dbReference type="SUPFAM" id="SSF53271">
    <property type="entry name" value="PRTase-like"/>
    <property type="match status" value="1"/>
</dbReference>
<dbReference type="PROSITE" id="PS00103">
    <property type="entry name" value="PUR_PYR_PR_TRANSFER"/>
    <property type="match status" value="1"/>
</dbReference>